<proteinExistence type="inferred from homology"/>
<sequence length="388" mass="41393">MNLHEYQAKQLFARYGLPAPVGYACTTPREAEEAASKIGAGPWVVKCQVHAGGRGKAGGVKVVNSKEDIRAFAENWLGKRLVTYQTDANGQPVNQILVEAATDIAKELYLGAVVDRSSRRVVFMASTEGGVEIEKVAEETPHLIHKVALDPLTGPMPYQGRELAFKLGLEGKLVQQFTKIFMGLATIFLERDLALIEINPLVITKQGDLICLDGKLGADGNALFRQPDLREMRDQSQEDPREAQAAQWELNYVALDGNIGCMVNGAGLAMGTMDIVKLHGGEPANFLDVGGGATKERVTEAFKIILSDDKVKAVLVNIFGGIVRCDLIADGIIGAVAEVGVNVPVVVRLEGNNAELGAKKLADSGLNIIAAKGLTDAAQQVVAAVEGK</sequence>
<name>SUCC_ECOLC</name>
<gene>
    <name evidence="1" type="primary">sucC</name>
    <name type="ordered locus">EcolC_2928</name>
</gene>
<feature type="chain" id="PRO_1000082075" description="Succinate--CoA ligase [ADP-forming] subunit beta">
    <location>
        <begin position="1"/>
        <end position="388"/>
    </location>
</feature>
<feature type="domain" description="ATP-grasp" evidence="1">
    <location>
        <begin position="9"/>
        <end position="244"/>
    </location>
</feature>
<feature type="binding site" evidence="1">
    <location>
        <position position="46"/>
    </location>
    <ligand>
        <name>ATP</name>
        <dbReference type="ChEBI" id="CHEBI:30616"/>
    </ligand>
</feature>
<feature type="binding site" evidence="1">
    <location>
        <begin position="53"/>
        <end position="55"/>
    </location>
    <ligand>
        <name>ATP</name>
        <dbReference type="ChEBI" id="CHEBI:30616"/>
    </ligand>
</feature>
<feature type="binding site" evidence="1">
    <location>
        <position position="99"/>
    </location>
    <ligand>
        <name>ATP</name>
        <dbReference type="ChEBI" id="CHEBI:30616"/>
    </ligand>
</feature>
<feature type="binding site" evidence="1">
    <location>
        <position position="102"/>
    </location>
    <ligand>
        <name>ATP</name>
        <dbReference type="ChEBI" id="CHEBI:30616"/>
    </ligand>
</feature>
<feature type="binding site" evidence="1">
    <location>
        <position position="107"/>
    </location>
    <ligand>
        <name>ATP</name>
        <dbReference type="ChEBI" id="CHEBI:30616"/>
    </ligand>
</feature>
<feature type="binding site" evidence="1">
    <location>
        <position position="199"/>
    </location>
    <ligand>
        <name>Mg(2+)</name>
        <dbReference type="ChEBI" id="CHEBI:18420"/>
    </ligand>
</feature>
<feature type="binding site" evidence="1">
    <location>
        <position position="213"/>
    </location>
    <ligand>
        <name>Mg(2+)</name>
        <dbReference type="ChEBI" id="CHEBI:18420"/>
    </ligand>
</feature>
<feature type="binding site" evidence="1">
    <location>
        <position position="264"/>
    </location>
    <ligand>
        <name>substrate</name>
        <note>ligand shared with subunit alpha</note>
    </ligand>
</feature>
<feature type="binding site" evidence="1">
    <location>
        <begin position="321"/>
        <end position="323"/>
    </location>
    <ligand>
        <name>substrate</name>
        <note>ligand shared with subunit alpha</note>
    </ligand>
</feature>
<protein>
    <recommendedName>
        <fullName evidence="1">Succinate--CoA ligase [ADP-forming] subunit beta</fullName>
        <ecNumber evidence="1">6.2.1.5</ecNumber>
    </recommendedName>
    <alternativeName>
        <fullName evidence="1">Succinyl-CoA synthetase subunit beta</fullName>
        <shortName evidence="1">SCS-beta</shortName>
    </alternativeName>
</protein>
<keyword id="KW-0067">ATP-binding</keyword>
<keyword id="KW-0436">Ligase</keyword>
<keyword id="KW-0460">Magnesium</keyword>
<keyword id="KW-0479">Metal-binding</keyword>
<keyword id="KW-0547">Nucleotide-binding</keyword>
<keyword id="KW-0816">Tricarboxylic acid cycle</keyword>
<comment type="function">
    <text evidence="1">Succinyl-CoA synthetase functions in the citric acid cycle (TCA), coupling the hydrolysis of succinyl-CoA to the synthesis of either ATP or GTP and thus represents the only step of substrate-level phosphorylation in the TCA. The beta subunit provides nucleotide specificity of the enzyme and binds the substrate succinate, while the binding sites for coenzyme A and phosphate are found in the alpha subunit.</text>
</comment>
<comment type="catalytic activity">
    <reaction evidence="1">
        <text>succinate + ATP + CoA = succinyl-CoA + ADP + phosphate</text>
        <dbReference type="Rhea" id="RHEA:17661"/>
        <dbReference type="ChEBI" id="CHEBI:30031"/>
        <dbReference type="ChEBI" id="CHEBI:30616"/>
        <dbReference type="ChEBI" id="CHEBI:43474"/>
        <dbReference type="ChEBI" id="CHEBI:57287"/>
        <dbReference type="ChEBI" id="CHEBI:57292"/>
        <dbReference type="ChEBI" id="CHEBI:456216"/>
        <dbReference type="EC" id="6.2.1.5"/>
    </reaction>
    <physiologicalReaction direction="right-to-left" evidence="1">
        <dbReference type="Rhea" id="RHEA:17663"/>
    </physiologicalReaction>
</comment>
<comment type="catalytic activity">
    <reaction evidence="1">
        <text>GTP + succinate + CoA = succinyl-CoA + GDP + phosphate</text>
        <dbReference type="Rhea" id="RHEA:22120"/>
        <dbReference type="ChEBI" id="CHEBI:30031"/>
        <dbReference type="ChEBI" id="CHEBI:37565"/>
        <dbReference type="ChEBI" id="CHEBI:43474"/>
        <dbReference type="ChEBI" id="CHEBI:57287"/>
        <dbReference type="ChEBI" id="CHEBI:57292"/>
        <dbReference type="ChEBI" id="CHEBI:58189"/>
    </reaction>
    <physiologicalReaction direction="right-to-left" evidence="1">
        <dbReference type="Rhea" id="RHEA:22122"/>
    </physiologicalReaction>
</comment>
<comment type="cofactor">
    <cofactor evidence="1">
        <name>Mg(2+)</name>
        <dbReference type="ChEBI" id="CHEBI:18420"/>
    </cofactor>
    <text evidence="1">Binds 1 Mg(2+) ion per subunit.</text>
</comment>
<comment type="pathway">
    <text evidence="1">Carbohydrate metabolism; tricarboxylic acid cycle; succinate from succinyl-CoA (ligase route): step 1/1.</text>
</comment>
<comment type="subunit">
    <text evidence="1">Heterotetramer of two alpha and two beta subunits.</text>
</comment>
<comment type="similarity">
    <text evidence="1">Belongs to the succinate/malate CoA ligase beta subunit family.</text>
</comment>
<reference key="1">
    <citation type="submission" date="2008-02" db="EMBL/GenBank/DDBJ databases">
        <title>Complete sequence of Escherichia coli C str. ATCC 8739.</title>
        <authorList>
            <person name="Copeland A."/>
            <person name="Lucas S."/>
            <person name="Lapidus A."/>
            <person name="Glavina del Rio T."/>
            <person name="Dalin E."/>
            <person name="Tice H."/>
            <person name="Bruce D."/>
            <person name="Goodwin L."/>
            <person name="Pitluck S."/>
            <person name="Kiss H."/>
            <person name="Brettin T."/>
            <person name="Detter J.C."/>
            <person name="Han C."/>
            <person name="Kuske C.R."/>
            <person name="Schmutz J."/>
            <person name="Larimer F."/>
            <person name="Land M."/>
            <person name="Hauser L."/>
            <person name="Kyrpides N."/>
            <person name="Mikhailova N."/>
            <person name="Ingram L."/>
            <person name="Richardson P."/>
        </authorList>
    </citation>
    <scope>NUCLEOTIDE SEQUENCE [LARGE SCALE GENOMIC DNA]</scope>
    <source>
        <strain>ATCC 8739 / DSM 1576 / NBRC 3972 / NCIMB 8545 / WDCM 00012 / Crooks</strain>
    </source>
</reference>
<accession>B1IY02</accession>
<organism>
    <name type="scientific">Escherichia coli (strain ATCC 8739 / DSM 1576 / NBRC 3972 / NCIMB 8545 / WDCM 00012 / Crooks)</name>
    <dbReference type="NCBI Taxonomy" id="481805"/>
    <lineage>
        <taxon>Bacteria</taxon>
        <taxon>Pseudomonadati</taxon>
        <taxon>Pseudomonadota</taxon>
        <taxon>Gammaproteobacteria</taxon>
        <taxon>Enterobacterales</taxon>
        <taxon>Enterobacteriaceae</taxon>
        <taxon>Escherichia</taxon>
    </lineage>
</organism>
<dbReference type="EC" id="6.2.1.5" evidence="1"/>
<dbReference type="EMBL" id="CP000946">
    <property type="protein sequence ID" value="ACA78555.1"/>
    <property type="molecule type" value="Genomic_DNA"/>
</dbReference>
<dbReference type="RefSeq" id="WP_001048602.1">
    <property type="nucleotide sequence ID" value="NZ_MTFT01000029.1"/>
</dbReference>
<dbReference type="SMR" id="B1IY02"/>
<dbReference type="GeneID" id="93776757"/>
<dbReference type="KEGG" id="ecl:EcolC_2928"/>
<dbReference type="HOGENOM" id="CLU_037430_4_0_6"/>
<dbReference type="UniPathway" id="UPA00223">
    <property type="reaction ID" value="UER00999"/>
</dbReference>
<dbReference type="GO" id="GO:0005829">
    <property type="term" value="C:cytosol"/>
    <property type="evidence" value="ECO:0007669"/>
    <property type="project" value="TreeGrafter"/>
</dbReference>
<dbReference type="GO" id="GO:0042709">
    <property type="term" value="C:succinate-CoA ligase complex"/>
    <property type="evidence" value="ECO:0007669"/>
    <property type="project" value="TreeGrafter"/>
</dbReference>
<dbReference type="GO" id="GO:0005524">
    <property type="term" value="F:ATP binding"/>
    <property type="evidence" value="ECO:0007669"/>
    <property type="project" value="UniProtKB-UniRule"/>
</dbReference>
<dbReference type="GO" id="GO:0000287">
    <property type="term" value="F:magnesium ion binding"/>
    <property type="evidence" value="ECO:0007669"/>
    <property type="project" value="UniProtKB-UniRule"/>
</dbReference>
<dbReference type="GO" id="GO:0004775">
    <property type="term" value="F:succinate-CoA ligase (ADP-forming) activity"/>
    <property type="evidence" value="ECO:0007669"/>
    <property type="project" value="UniProtKB-UniRule"/>
</dbReference>
<dbReference type="GO" id="GO:0004776">
    <property type="term" value="F:succinate-CoA ligase (GDP-forming) activity"/>
    <property type="evidence" value="ECO:0007669"/>
    <property type="project" value="RHEA"/>
</dbReference>
<dbReference type="GO" id="GO:0006104">
    <property type="term" value="P:succinyl-CoA metabolic process"/>
    <property type="evidence" value="ECO:0007669"/>
    <property type="project" value="TreeGrafter"/>
</dbReference>
<dbReference type="GO" id="GO:0006099">
    <property type="term" value="P:tricarboxylic acid cycle"/>
    <property type="evidence" value="ECO:0007669"/>
    <property type="project" value="UniProtKB-UniRule"/>
</dbReference>
<dbReference type="FunFam" id="3.30.1490.20:FF:000002">
    <property type="entry name" value="Succinate--CoA ligase [ADP-forming] subunit beta"/>
    <property type="match status" value="1"/>
</dbReference>
<dbReference type="FunFam" id="3.30.470.20:FF:000002">
    <property type="entry name" value="Succinate--CoA ligase [ADP-forming] subunit beta"/>
    <property type="match status" value="1"/>
</dbReference>
<dbReference type="FunFam" id="3.40.50.261:FF:000001">
    <property type="entry name" value="Succinate--CoA ligase [ADP-forming] subunit beta"/>
    <property type="match status" value="1"/>
</dbReference>
<dbReference type="Gene3D" id="3.30.1490.20">
    <property type="entry name" value="ATP-grasp fold, A domain"/>
    <property type="match status" value="1"/>
</dbReference>
<dbReference type="Gene3D" id="3.30.470.20">
    <property type="entry name" value="ATP-grasp fold, B domain"/>
    <property type="match status" value="1"/>
</dbReference>
<dbReference type="Gene3D" id="3.40.50.261">
    <property type="entry name" value="Succinyl-CoA synthetase domains"/>
    <property type="match status" value="1"/>
</dbReference>
<dbReference type="HAMAP" id="MF_00558">
    <property type="entry name" value="Succ_CoA_beta"/>
    <property type="match status" value="1"/>
</dbReference>
<dbReference type="InterPro" id="IPR011761">
    <property type="entry name" value="ATP-grasp"/>
</dbReference>
<dbReference type="InterPro" id="IPR013650">
    <property type="entry name" value="ATP-grasp_succ-CoA_synth-type"/>
</dbReference>
<dbReference type="InterPro" id="IPR013815">
    <property type="entry name" value="ATP_grasp_subdomain_1"/>
</dbReference>
<dbReference type="InterPro" id="IPR017866">
    <property type="entry name" value="Succ-CoA_synthase_bsu_CS"/>
</dbReference>
<dbReference type="InterPro" id="IPR005811">
    <property type="entry name" value="SUCC_ACL_C"/>
</dbReference>
<dbReference type="InterPro" id="IPR005809">
    <property type="entry name" value="Succ_CoA_ligase-like_bsu"/>
</dbReference>
<dbReference type="InterPro" id="IPR016102">
    <property type="entry name" value="Succinyl-CoA_synth-like"/>
</dbReference>
<dbReference type="NCBIfam" id="NF001913">
    <property type="entry name" value="PRK00696.1"/>
    <property type="match status" value="1"/>
</dbReference>
<dbReference type="NCBIfam" id="TIGR01016">
    <property type="entry name" value="sucCoAbeta"/>
    <property type="match status" value="1"/>
</dbReference>
<dbReference type="PANTHER" id="PTHR11815:SF10">
    <property type="entry name" value="SUCCINATE--COA LIGASE [GDP-FORMING] SUBUNIT BETA, MITOCHONDRIAL"/>
    <property type="match status" value="1"/>
</dbReference>
<dbReference type="PANTHER" id="PTHR11815">
    <property type="entry name" value="SUCCINYL-COA SYNTHETASE BETA CHAIN"/>
    <property type="match status" value="1"/>
</dbReference>
<dbReference type="Pfam" id="PF08442">
    <property type="entry name" value="ATP-grasp_2"/>
    <property type="match status" value="1"/>
</dbReference>
<dbReference type="Pfam" id="PF00549">
    <property type="entry name" value="Ligase_CoA"/>
    <property type="match status" value="1"/>
</dbReference>
<dbReference type="PIRSF" id="PIRSF001554">
    <property type="entry name" value="SucCS_beta"/>
    <property type="match status" value="1"/>
</dbReference>
<dbReference type="SUPFAM" id="SSF56059">
    <property type="entry name" value="Glutathione synthetase ATP-binding domain-like"/>
    <property type="match status" value="1"/>
</dbReference>
<dbReference type="SUPFAM" id="SSF52210">
    <property type="entry name" value="Succinyl-CoA synthetase domains"/>
    <property type="match status" value="1"/>
</dbReference>
<dbReference type="PROSITE" id="PS50975">
    <property type="entry name" value="ATP_GRASP"/>
    <property type="match status" value="1"/>
</dbReference>
<dbReference type="PROSITE" id="PS01217">
    <property type="entry name" value="SUCCINYL_COA_LIG_3"/>
    <property type="match status" value="1"/>
</dbReference>
<evidence type="ECO:0000255" key="1">
    <source>
        <dbReference type="HAMAP-Rule" id="MF_00558"/>
    </source>
</evidence>